<dbReference type="EC" id="7.6.2.1" evidence="3"/>
<dbReference type="EMBL" id="Z98866">
    <property type="protein sequence ID" value="CAB11550.4"/>
    <property type="molecule type" value="Genomic_DNA"/>
</dbReference>
<dbReference type="EMBL" id="Z98866">
    <property type="protein sequence ID" value="CAE54923.1"/>
    <property type="molecule type" value="Genomic_DNA"/>
</dbReference>
<dbReference type="EMBL" id="Z98866">
    <property type="protein sequence ID" value="CAX51688.2"/>
    <property type="molecule type" value="Genomic_DNA"/>
</dbReference>
<dbReference type="PIR" id="D88601">
    <property type="entry name" value="D88601"/>
</dbReference>
<dbReference type="PIR" id="T27057">
    <property type="entry name" value="T27057"/>
</dbReference>
<dbReference type="RefSeq" id="NP_001022894.1">
    <molecule id="Q9U280-1"/>
    <property type="nucleotide sequence ID" value="NM_001027723.3"/>
</dbReference>
<dbReference type="RefSeq" id="NP_001022895.1">
    <property type="nucleotide sequence ID" value="NM_001027724.2"/>
</dbReference>
<dbReference type="RefSeq" id="NP_001255165.1">
    <molecule id="Q9U280-3"/>
    <property type="nucleotide sequence ID" value="NM_001268236.3"/>
</dbReference>
<dbReference type="RefSeq" id="NP_001367088.1">
    <molecule id="Q9U280-2"/>
    <property type="nucleotide sequence ID" value="NM_001379952.2"/>
</dbReference>
<dbReference type="SMR" id="Q9U280"/>
<dbReference type="BioGRID" id="41845">
    <property type="interactions" value="3"/>
</dbReference>
<dbReference type="FunCoup" id="Q9U280">
    <property type="interactions" value="1978"/>
</dbReference>
<dbReference type="STRING" id="6239.Y49E10.11c.1"/>
<dbReference type="SwissLipids" id="SLP:000000331"/>
<dbReference type="TCDB" id="3.A.3.8.15">
    <property type="family name" value="the p-type atpase (p-atpase) superfamily"/>
</dbReference>
<dbReference type="PaxDb" id="6239-Y49E10.11c.1"/>
<dbReference type="PeptideAtlas" id="Q9U280"/>
<dbReference type="EnsemblMetazoa" id="Y49E10.11a.1">
    <molecule id="Q9U280-1"/>
    <property type="protein sequence ID" value="Y49E10.11a.1"/>
    <property type="gene ID" value="WBGene00013034"/>
</dbReference>
<dbReference type="EnsemblMetazoa" id="Y49E10.11a.2">
    <molecule id="Q9U280-1"/>
    <property type="protein sequence ID" value="Y49E10.11a.2"/>
    <property type="gene ID" value="WBGene00013034"/>
</dbReference>
<dbReference type="EnsemblMetazoa" id="Y49E10.11b.1">
    <molecule id="Q9U280-2"/>
    <property type="protein sequence ID" value="Y49E10.11b.1"/>
    <property type="gene ID" value="WBGene00013034"/>
</dbReference>
<dbReference type="EnsemblMetazoa" id="Y49E10.11c.1">
    <molecule id="Q9U280-3"/>
    <property type="protein sequence ID" value="Y49E10.11c.1"/>
    <property type="gene ID" value="WBGene00013034"/>
</dbReference>
<dbReference type="GeneID" id="176666"/>
<dbReference type="KEGG" id="cel:CELE_Y49E10.11"/>
<dbReference type="UCSC" id="Y49E10.11a">
    <property type="organism name" value="c. elegans"/>
</dbReference>
<dbReference type="AGR" id="WB:WBGene00013034"/>
<dbReference type="CTD" id="176666"/>
<dbReference type="WormBase" id="Y49E10.11a">
    <molecule id="Q9U280-1"/>
    <property type="protein sequence ID" value="CE28133"/>
    <property type="gene ID" value="WBGene00013034"/>
    <property type="gene designation" value="tat-1"/>
</dbReference>
<dbReference type="WormBase" id="Y49E10.11b">
    <molecule id="Q9U280-2"/>
    <property type="protein sequence ID" value="CE36241"/>
    <property type="gene ID" value="WBGene00013034"/>
    <property type="gene designation" value="tat-1"/>
</dbReference>
<dbReference type="WormBase" id="Y49E10.11c">
    <molecule id="Q9U280-3"/>
    <property type="protein sequence ID" value="CE44010"/>
    <property type="gene ID" value="WBGene00013034"/>
    <property type="gene designation" value="tat-1"/>
</dbReference>
<dbReference type="eggNOG" id="KOG0206">
    <property type="taxonomic scope" value="Eukaryota"/>
</dbReference>
<dbReference type="GeneTree" id="ENSGT00940000168736"/>
<dbReference type="HOGENOM" id="CLU_000846_5_2_1"/>
<dbReference type="InParanoid" id="Q9U280"/>
<dbReference type="OMA" id="KHTYKKT"/>
<dbReference type="OrthoDB" id="377733at2759"/>
<dbReference type="PhylomeDB" id="Q9U280"/>
<dbReference type="Reactome" id="R-CEL-6798695">
    <property type="pathway name" value="Neutrophil degranulation"/>
</dbReference>
<dbReference type="Reactome" id="R-CEL-936837">
    <property type="pathway name" value="Ion transport by P-type ATPases"/>
</dbReference>
<dbReference type="PRO" id="PR:Q9U280"/>
<dbReference type="Proteomes" id="UP000001940">
    <property type="component" value="Chromosome III"/>
</dbReference>
<dbReference type="Bgee" id="WBGene00013034">
    <property type="expression patterns" value="Expressed in germ line (C elegans) and 4 other cell types or tissues"/>
</dbReference>
<dbReference type="GO" id="GO:0016324">
    <property type="term" value="C:apical plasma membrane"/>
    <property type="evidence" value="ECO:0000314"/>
    <property type="project" value="WormBase"/>
</dbReference>
<dbReference type="GO" id="GO:0016323">
    <property type="term" value="C:basolateral plasma membrane"/>
    <property type="evidence" value="ECO:0000314"/>
    <property type="project" value="WormBase"/>
</dbReference>
<dbReference type="GO" id="GO:0005737">
    <property type="term" value="C:cytoplasm"/>
    <property type="evidence" value="ECO:0000314"/>
    <property type="project" value="WormBase"/>
</dbReference>
<dbReference type="GO" id="GO:0005769">
    <property type="term" value="C:early endosome"/>
    <property type="evidence" value="ECO:0000314"/>
    <property type="project" value="WormBase"/>
</dbReference>
<dbReference type="GO" id="GO:0031901">
    <property type="term" value="C:early endosome membrane"/>
    <property type="evidence" value="ECO:0007669"/>
    <property type="project" value="UniProtKB-SubCell"/>
</dbReference>
<dbReference type="GO" id="GO:0005794">
    <property type="term" value="C:Golgi apparatus"/>
    <property type="evidence" value="ECO:0000314"/>
    <property type="project" value="WormBase"/>
</dbReference>
<dbReference type="GO" id="GO:0005770">
    <property type="term" value="C:late endosome"/>
    <property type="evidence" value="ECO:0000314"/>
    <property type="project" value="WormBase"/>
</dbReference>
<dbReference type="GO" id="GO:0005886">
    <property type="term" value="C:plasma membrane"/>
    <property type="evidence" value="ECO:0000314"/>
    <property type="project" value="WormBase"/>
</dbReference>
<dbReference type="GO" id="GO:0055037">
    <property type="term" value="C:recycling endosome"/>
    <property type="evidence" value="ECO:0000314"/>
    <property type="project" value="WormBase"/>
</dbReference>
<dbReference type="GO" id="GO:0055038">
    <property type="term" value="C:recycling endosome membrane"/>
    <property type="evidence" value="ECO:0007669"/>
    <property type="project" value="UniProtKB-SubCell"/>
</dbReference>
<dbReference type="GO" id="GO:0005802">
    <property type="term" value="C:trans-Golgi network"/>
    <property type="evidence" value="ECO:0000318"/>
    <property type="project" value="GO_Central"/>
</dbReference>
<dbReference type="GO" id="GO:0005524">
    <property type="term" value="F:ATP binding"/>
    <property type="evidence" value="ECO:0007669"/>
    <property type="project" value="UniProtKB-KW"/>
</dbReference>
<dbReference type="GO" id="GO:0016887">
    <property type="term" value="F:ATP hydrolysis activity"/>
    <property type="evidence" value="ECO:0007669"/>
    <property type="project" value="InterPro"/>
</dbReference>
<dbReference type="GO" id="GO:0140326">
    <property type="term" value="F:ATPase-coupled intramembrane lipid transporter activity"/>
    <property type="evidence" value="ECO:0000315"/>
    <property type="project" value="WormBase"/>
</dbReference>
<dbReference type="GO" id="GO:0000287">
    <property type="term" value="F:magnesium ion binding"/>
    <property type="evidence" value="ECO:0007669"/>
    <property type="project" value="InterPro"/>
</dbReference>
<dbReference type="GO" id="GO:0090556">
    <property type="term" value="F:phosphatidylserine floppase activity"/>
    <property type="evidence" value="ECO:0007669"/>
    <property type="project" value="RHEA"/>
</dbReference>
<dbReference type="GO" id="GO:0006897">
    <property type="term" value="P:endocytosis"/>
    <property type="evidence" value="ECO:0000315"/>
    <property type="project" value="WormBase"/>
</dbReference>
<dbReference type="GO" id="GO:0007040">
    <property type="term" value="P:lysosome organization"/>
    <property type="evidence" value="ECO:0000315"/>
    <property type="project" value="WormBase"/>
</dbReference>
<dbReference type="GO" id="GO:0060101">
    <property type="term" value="P:negative regulation of phagocytosis, engulfment"/>
    <property type="evidence" value="ECO:0000315"/>
    <property type="project" value="WormBase"/>
</dbReference>
<dbReference type="GO" id="GO:0045332">
    <property type="term" value="P:phospholipid translocation"/>
    <property type="evidence" value="ECO:0000315"/>
    <property type="project" value="WormBase"/>
</dbReference>
<dbReference type="GO" id="GO:0015914">
    <property type="term" value="P:phospholipid transport"/>
    <property type="evidence" value="ECO:0000315"/>
    <property type="project" value="WormBase"/>
</dbReference>
<dbReference type="GO" id="GO:0060100">
    <property type="term" value="P:positive regulation of phagocytosis, engulfment"/>
    <property type="evidence" value="ECO:0000315"/>
    <property type="project" value="WormBase"/>
</dbReference>
<dbReference type="CDD" id="cd02073">
    <property type="entry name" value="P-type_ATPase_APLT_Dnf-like"/>
    <property type="match status" value="1"/>
</dbReference>
<dbReference type="FunFam" id="2.70.150.10:FF:000021">
    <property type="entry name" value="Phospholipid-transporting ATPase"/>
    <property type="match status" value="1"/>
</dbReference>
<dbReference type="FunFam" id="3.40.1110.10:FF:000110">
    <property type="entry name" value="Phospholipid-transporting ATPase"/>
    <property type="match status" value="1"/>
</dbReference>
<dbReference type="FunFam" id="3.40.50.1000:FF:000190">
    <property type="entry name" value="Phospholipid-transporting ATPase"/>
    <property type="match status" value="1"/>
</dbReference>
<dbReference type="Gene3D" id="3.40.1110.10">
    <property type="entry name" value="Calcium-transporting ATPase, cytoplasmic domain N"/>
    <property type="match status" value="1"/>
</dbReference>
<dbReference type="Gene3D" id="2.70.150.10">
    <property type="entry name" value="Calcium-transporting ATPase, cytoplasmic transduction domain A"/>
    <property type="match status" value="1"/>
</dbReference>
<dbReference type="Gene3D" id="3.40.50.1000">
    <property type="entry name" value="HAD superfamily/HAD-like"/>
    <property type="match status" value="1"/>
</dbReference>
<dbReference type="InterPro" id="IPR023299">
    <property type="entry name" value="ATPase_P-typ_cyto_dom_N"/>
</dbReference>
<dbReference type="InterPro" id="IPR018303">
    <property type="entry name" value="ATPase_P-typ_P_site"/>
</dbReference>
<dbReference type="InterPro" id="IPR023298">
    <property type="entry name" value="ATPase_P-typ_TM_dom_sf"/>
</dbReference>
<dbReference type="InterPro" id="IPR008250">
    <property type="entry name" value="ATPase_P-typ_transduc_dom_A_sf"/>
</dbReference>
<dbReference type="InterPro" id="IPR036412">
    <property type="entry name" value="HAD-like_sf"/>
</dbReference>
<dbReference type="InterPro" id="IPR023214">
    <property type="entry name" value="HAD_sf"/>
</dbReference>
<dbReference type="InterPro" id="IPR006539">
    <property type="entry name" value="P-type_ATPase_IV"/>
</dbReference>
<dbReference type="InterPro" id="IPR032631">
    <property type="entry name" value="P-type_ATPase_N"/>
</dbReference>
<dbReference type="InterPro" id="IPR001757">
    <property type="entry name" value="P_typ_ATPase"/>
</dbReference>
<dbReference type="InterPro" id="IPR032630">
    <property type="entry name" value="P_typ_ATPase_c"/>
</dbReference>
<dbReference type="InterPro" id="IPR044492">
    <property type="entry name" value="P_typ_ATPase_HD_dom"/>
</dbReference>
<dbReference type="NCBIfam" id="TIGR01652">
    <property type="entry name" value="ATPase-Plipid"/>
    <property type="match status" value="1"/>
</dbReference>
<dbReference type="NCBIfam" id="TIGR01494">
    <property type="entry name" value="ATPase_P-type"/>
    <property type="match status" value="2"/>
</dbReference>
<dbReference type="PANTHER" id="PTHR24092:SF150">
    <property type="entry name" value="PHOSPHOLIPID-TRANSPORTING ATPASE"/>
    <property type="match status" value="1"/>
</dbReference>
<dbReference type="PANTHER" id="PTHR24092">
    <property type="entry name" value="PROBABLE PHOSPHOLIPID-TRANSPORTING ATPASE"/>
    <property type="match status" value="1"/>
</dbReference>
<dbReference type="Pfam" id="PF13246">
    <property type="entry name" value="Cation_ATPase"/>
    <property type="match status" value="1"/>
</dbReference>
<dbReference type="Pfam" id="PF16212">
    <property type="entry name" value="PhoLip_ATPase_C"/>
    <property type="match status" value="1"/>
</dbReference>
<dbReference type="Pfam" id="PF16209">
    <property type="entry name" value="PhoLip_ATPase_N"/>
    <property type="match status" value="1"/>
</dbReference>
<dbReference type="PRINTS" id="PR00119">
    <property type="entry name" value="CATATPASE"/>
</dbReference>
<dbReference type="SFLD" id="SFLDS00003">
    <property type="entry name" value="Haloacid_Dehalogenase"/>
    <property type="match status" value="1"/>
</dbReference>
<dbReference type="SFLD" id="SFLDF00027">
    <property type="entry name" value="p-type_atpase"/>
    <property type="match status" value="1"/>
</dbReference>
<dbReference type="SUPFAM" id="SSF81653">
    <property type="entry name" value="Calcium ATPase, transduction domain A"/>
    <property type="match status" value="1"/>
</dbReference>
<dbReference type="SUPFAM" id="SSF81665">
    <property type="entry name" value="Calcium ATPase, transmembrane domain M"/>
    <property type="match status" value="1"/>
</dbReference>
<dbReference type="SUPFAM" id="SSF56784">
    <property type="entry name" value="HAD-like"/>
    <property type="match status" value="1"/>
</dbReference>
<dbReference type="SUPFAM" id="SSF81660">
    <property type="entry name" value="Metal cation-transporting ATPase, ATP-binding domain N"/>
    <property type="match status" value="1"/>
</dbReference>
<dbReference type="PROSITE" id="PS00154">
    <property type="entry name" value="ATPASE_E1_E2"/>
    <property type="match status" value="1"/>
</dbReference>
<keyword id="KW-0025">Alternative splicing</keyword>
<keyword id="KW-0067">ATP-binding</keyword>
<keyword id="KW-1003">Cell membrane</keyword>
<keyword id="KW-0967">Endosome</keyword>
<keyword id="KW-0460">Magnesium</keyword>
<keyword id="KW-0472">Membrane</keyword>
<keyword id="KW-0479">Metal-binding</keyword>
<keyword id="KW-0547">Nucleotide-binding</keyword>
<keyword id="KW-1185">Reference proteome</keyword>
<keyword id="KW-1278">Translocase</keyword>
<keyword id="KW-0812">Transmembrane</keyword>
<keyword id="KW-1133">Transmembrane helix</keyword>
<comment type="function">
    <text evidence="3 4 5">Transports phosphatidylserine from the outer to the inner leaflet of the plasma membrane, thereby maintaining the enrichment of this phospholipid in the inner leaflet (PubMed:18436785, PubMed:21170358, PubMed:23427264). Ectopic exposure of phosphatidylserine on the cell surface may result in removal of living cells by neighboring phagocytes (PubMed:18436785). Regulation of the phosphatidylserine distribution in plasma membranes is likely to help in the maintenance and control of the membrane surface charge (PubMed:23427264). Plays a role in the formation of the tubular membrane structure and in membrane trafficking and is specifically involved in the recycling and degradation of endocytic cargo, likely with its chaperone protein chat-1 (PubMed:21170358, PubMed:23427264).</text>
</comment>
<comment type="catalytic activity">
    <reaction evidence="3">
        <text>ATP + H2O + phospholipidSide 1 = ADP + phosphate + phospholipidSide 2.</text>
        <dbReference type="EC" id="7.6.2.1"/>
    </reaction>
</comment>
<comment type="catalytic activity">
    <reaction evidence="3">
        <text>a 1,2-diacyl-sn-glycero-3-phospho-L-serine(out) + ATP + H2O = a 1,2-diacyl-sn-glycero-3-phospho-L-serine(in) + ADP + phosphate + H(+)</text>
        <dbReference type="Rhea" id="RHEA:38567"/>
        <dbReference type="ChEBI" id="CHEBI:15377"/>
        <dbReference type="ChEBI" id="CHEBI:15378"/>
        <dbReference type="ChEBI" id="CHEBI:30616"/>
        <dbReference type="ChEBI" id="CHEBI:43474"/>
        <dbReference type="ChEBI" id="CHEBI:57262"/>
        <dbReference type="ChEBI" id="CHEBI:456216"/>
    </reaction>
    <physiologicalReaction direction="left-to-right" evidence="3">
        <dbReference type="Rhea" id="RHEA:38568"/>
    </physiologicalReaction>
</comment>
<comment type="subcellular location">
    <subcellularLocation>
        <location evidence="3">Cell membrane</location>
        <topology evidence="3">Multi-pass membrane protein</topology>
    </subcellularLocation>
    <subcellularLocation>
        <location evidence="4">Early endosome membrane</location>
        <topology>Multi-pass membrane protein</topology>
    </subcellularLocation>
    <subcellularLocation>
        <location evidence="4">Recycling endosome membrane</location>
        <topology>Multi-pass membrane protein</topology>
    </subcellularLocation>
    <text evidence="4">Colocalizes with its chaperone chat-1 at apical and basolateral cell membranes, on early endosomes and on recycling endosomes. Also localizes to intracellular tubular and vesicular structures.</text>
</comment>
<comment type="alternative products">
    <event type="alternative splicing"/>
    <isoform>
        <id>Q9U280-1</id>
        <name>a</name>
        <sequence type="displayed"/>
    </isoform>
    <isoform>
        <id>Q9U280-2</id>
        <name>b</name>
        <sequence type="described" ref="VSP_053522 VSP_053524"/>
    </isoform>
    <isoform>
        <id>Q9U280-3</id>
        <name>c</name>
        <sequence type="described" ref="VSP_053523"/>
    </isoform>
</comment>
<comment type="disruption phenotype">
    <text evidence="5">Results in abnormal formation of intestinal vacuoles.</text>
</comment>
<comment type="similarity">
    <text evidence="9">Belongs to the cation transport ATPase (P-type) (TC 3.A.3) family. Type IV subfamily.</text>
</comment>
<organism>
    <name type="scientific">Caenorhabditis elegans</name>
    <dbReference type="NCBI Taxonomy" id="6239"/>
    <lineage>
        <taxon>Eukaryota</taxon>
        <taxon>Metazoa</taxon>
        <taxon>Ecdysozoa</taxon>
        <taxon>Nematoda</taxon>
        <taxon>Chromadorea</taxon>
        <taxon>Rhabditida</taxon>
        <taxon>Rhabditina</taxon>
        <taxon>Rhabditomorpha</taxon>
        <taxon>Rhabditoidea</taxon>
        <taxon>Rhabditidae</taxon>
        <taxon>Peloderinae</taxon>
        <taxon>Caenorhabditis</taxon>
    </lineage>
</organism>
<protein>
    <recommendedName>
        <fullName>Phospholipid-transporting ATPase tat-1</fullName>
        <shortName evidence="6 7 8">TAT-1</shortName>
        <ecNumber evidence="3">7.6.2.1</ecNumber>
    </recommendedName>
</protein>
<accession>Q9U280</accession>
<accession>C0P289</accession>
<accession>Q7JK70</accession>
<feature type="chain" id="PRO_0000424852" description="Phospholipid-transporting ATPase tat-1">
    <location>
        <begin position="1"/>
        <end position="1139"/>
    </location>
</feature>
<feature type="transmembrane region" description="Helical" evidence="2">
    <location>
        <begin position="78"/>
        <end position="98"/>
    </location>
</feature>
<feature type="transmembrane region" description="Helical" evidence="2">
    <location>
        <begin position="276"/>
        <end position="296"/>
    </location>
</feature>
<feature type="transmembrane region" description="Helical" evidence="2">
    <location>
        <begin position="318"/>
        <end position="338"/>
    </location>
</feature>
<feature type="transmembrane region" description="Helical" evidence="2">
    <location>
        <begin position="831"/>
        <end position="851"/>
    </location>
</feature>
<feature type="transmembrane region" description="Helical" evidence="2">
    <location>
        <begin position="855"/>
        <end position="875"/>
    </location>
</feature>
<feature type="transmembrane region" description="Helical" evidence="2">
    <location>
        <begin position="901"/>
        <end position="921"/>
    </location>
</feature>
<feature type="transmembrane region" description="Helical" evidence="2">
    <location>
        <begin position="935"/>
        <end position="955"/>
    </location>
</feature>
<feature type="transmembrane region" description="Helical" evidence="2">
    <location>
        <begin position="972"/>
        <end position="992"/>
    </location>
</feature>
<feature type="transmembrane region" description="Helical" evidence="2">
    <location>
        <begin position="1013"/>
        <end position="1033"/>
    </location>
</feature>
<feature type="active site" description="4-aspartylphosphate intermediate" evidence="1">
    <location>
        <position position="388"/>
    </location>
</feature>
<feature type="splice variant" id="VSP_053522" description="In isoform b." evidence="9">
    <original>SYSSNVLENMRLLTSSLRGSTTGS</original>
    <variation>RKHVHLHTIIVAIERRLKAVCEWV</variation>
    <location>
        <begin position="1066"/>
        <end position="1089"/>
    </location>
</feature>
<feature type="splice variant" id="VSP_053523" description="In isoform c." evidence="9">
    <original>YSSNVLENMRLLTSSLRGSTTGSTRSRTASEASLALAEQTRYGFAFSQDESSAVAQTELIRNVDSTREKPTGR</original>
    <variation>SWAAYQGPTKDGAHVFANRFSLRKRIQPTSTTAASHPSATSPPPNGYVEKSQLNGKNGKHHRAKSPDYGSTELSTWSTRDEHEVEYKIPRGRKERSSYTNRAFIAEDNNVTSIVVNDEEDGSGTRL</variation>
    <location>
        <begin position="1067"/>
        <end position="1139"/>
    </location>
</feature>
<feature type="splice variant" id="VSP_053524" description="In isoform b." evidence="9">
    <location>
        <begin position="1090"/>
        <end position="1139"/>
    </location>
</feature>
<reference key="1">
    <citation type="journal article" date="1998" name="Science">
        <title>Genome sequence of the nematode C. elegans: a platform for investigating biology.</title>
        <authorList>
            <consortium name="The C. elegans sequencing consortium"/>
        </authorList>
    </citation>
    <scope>NUCLEOTIDE SEQUENCE [LARGE SCALE GENOMIC DNA]</scope>
    <source>
        <strain>Bristol N2</strain>
    </source>
</reference>
<reference key="2">
    <citation type="journal article" date="2008" name="Science">
        <title>Role of C. elegans TAT-1 protein in maintaining plasma membrane phosphatidylserine asymmetry.</title>
        <authorList>
            <person name="Darland-Ransom M."/>
            <person name="Wang X."/>
            <person name="Sun C.L."/>
            <person name="Mapes J."/>
            <person name="Gengyo-Ando K."/>
            <person name="Mitani S."/>
            <person name="Xue D."/>
        </authorList>
    </citation>
    <scope>FUNCTION</scope>
    <scope>CATALYTIC ACTIVITY</scope>
    <scope>SUBCELLULAR LOCATION</scope>
</reference>
<reference key="3">
    <citation type="journal article" date="2010" name="PLoS Genet.">
        <title>Endocytic sorting and recycling require membrane phosphatidylserine asymmetry maintained by TAT-1/CHAT-1.</title>
        <authorList>
            <person name="Chen B."/>
            <person name="Jiang Y."/>
            <person name="Zeng S."/>
            <person name="Yan J."/>
            <person name="Li X."/>
            <person name="Zhang Y."/>
            <person name="Zou W."/>
            <person name="Wang X."/>
        </authorList>
    </citation>
    <scope>FUNCTION</scope>
    <scope>SUBCELLULAR LOCATION</scope>
</reference>
<reference key="4">
    <citation type="journal article" date="2013" name="Mol. Biol. Cell">
        <title>Inactivation of Caenorhabditis elegans aminopeptidase DNPP-1 restores endocytic sorting and recycling in tat-1 mutants.</title>
        <authorList>
            <person name="Li X."/>
            <person name="Chen B."/>
            <person name="Yoshina S."/>
            <person name="Cai T."/>
            <person name="Yang F."/>
            <person name="Mitani S."/>
            <person name="Wang X."/>
        </authorList>
    </citation>
    <scope>FUNCTION</scope>
    <scope>DISRUPTION PHENOTYPE</scope>
</reference>
<proteinExistence type="evidence at protein level"/>
<gene>
    <name type="primary">tat-1</name>
    <name type="ORF">Y49E10.11</name>
</gene>
<name>TAT1_CAEEL</name>
<sequence>MPTEARDNNRHIHLGKVRDPHHQHAQRFCSNRISTCKYNGFSFLPRFLYEQFRRYNNIFFLAIALLQQIPDVSPTGRYTTAVPFLIILSVSALKEIFEDVKRRRSDNKVNAFSVEILVDGHWIEKQWKDVSVGDFIRIDNDSLFPADLLLLASSEQQGMAYIETSNLDGETNLKIKQALDITSTMTSPEKLSQFESEITCEPPSRHVNEFNGNIEINGVARHFGIDQLLLRGARLKNTAWIFGAVIYTGHDSKLLMNSKRAPLKSGTIDVQTNYRIIFLFFVLVALALISATGSEIWRGNNIPQAWYLSFLEHDPKGSFLWGVLTFFILYNNLIPISLQVTLEVVRFFQAIYINNDIEMYDVNSDSCAIARTSNLNEELGQVKFIMSDKTGTLTRNVMKFKRLSIGSRNYGNNEDDEFADASLIEDYRQGDEHSTSILEVLKMMAVCHTVVPENKDGQLIYQSSSPDEAALVRGAASQSVSFHTRQPQKVICNVFGEDETIEILDVIDFTSDRKRMSVIVRDGAGGDIKLYTKGADTVIFERLEHGKEQEEAVEYCTEHLEDYASFGYRTLCFSMRHLTEQEYSQWAPEYKKAILAIDNRAKLLADAAEKLERNMILVGATAIEDKLQEWVPETIQALMAADIRVWMLTGDKRETAINIAHSCALCHTNTELLIVDKTTYEETYQKLEQFVARAIELEKQEKGFAMVIDGKSLLHALTGEARKHFGDLALRCHAVVCCRMSPMQKAEVVEMVRKLAKHVVLAIGDGANDVAMIQAANVGVGISGEEGLQAASASDYAIPRFHFLRRLLLVHGAWNHDRSVKVILYSFYKNICLYIIELWFAMFSAWSGQTIFERWTIGMFNVIFTAWPPVVLGLFDHPVPAEQIMKYPALYASFQNRAFSIGNFSLWIGLAIVHSLSLFFLTYATMEHQVVWDNGLTGGWLMLGNCAYTFVVATVCFKALLECDSWTWPVVVACIGSIGLWIVFVIVYSLVFPHIGGIGADMAGMAAIMMSSYTFWLALLFIPLATLLWDLVIKSLFTIAMPTPRELAVMYNKRTTSFNGFERLASYSSNVLENMRLLTSSLRGSTTGSTRSRTASEASLALAEQTRYGFAFSQDESSAVAQTELIRNVDSTREKPTGR</sequence>
<evidence type="ECO:0000250" key="1"/>
<evidence type="ECO:0000255" key="2"/>
<evidence type="ECO:0000269" key="3">
    <source>
    </source>
</evidence>
<evidence type="ECO:0000269" key="4">
    <source>
    </source>
</evidence>
<evidence type="ECO:0000269" key="5">
    <source>
    </source>
</evidence>
<evidence type="ECO:0000303" key="6">
    <source>
    </source>
</evidence>
<evidence type="ECO:0000303" key="7">
    <source>
    </source>
</evidence>
<evidence type="ECO:0000303" key="8">
    <source>
    </source>
</evidence>
<evidence type="ECO:0000305" key="9"/>